<evidence type="ECO:0000255" key="1"/>
<evidence type="ECO:0000269" key="2">
    <source>
    </source>
</evidence>
<evidence type="ECO:0000305" key="3"/>
<organism>
    <name type="scientific">Cereibacter sphaeroides (strain ATCC 17023 / DSM 158 / JCM 6121 / CCUG 31486 / LMG 2827 / NBRC 12203 / NCIMB 8253 / ATH 2.4.1.)</name>
    <name type="common">Rhodobacter sphaeroides</name>
    <dbReference type="NCBI Taxonomy" id="272943"/>
    <lineage>
        <taxon>Bacteria</taxon>
        <taxon>Pseudomonadati</taxon>
        <taxon>Pseudomonadota</taxon>
        <taxon>Alphaproteobacteria</taxon>
        <taxon>Rhodobacterales</taxon>
        <taxon>Paracoccaceae</taxon>
        <taxon>Cereibacter</taxon>
    </lineage>
</organism>
<sequence length="310" mass="33357">MTDIRITGIPKEAGFGDYVALLKPRVMSLVVFTALVGLLVAPVTVHPMIALTGILFIALGAGASGALNMWWDEDIDRVMKRTRNRPVPSGTVAPGEALGIGLALSGIAVVMLGLATNLFAAGLLAFTIFFYAVVYSMWLKRTTPQNIVIGGAAGAFPPMIGWAVATGGVSVESLFMFALIFMWTPPHFWSLALFMKSDYSDAGVPMLTVTHGRRVTRAHVLVYSLLLAPLAVAGAFTGIGGPLYLATALALNGWLLVGAVRIWRRDEAQAEADRYRVEKGFFRFSLYYLFLHFGAILAEAALKPYGLGGW</sequence>
<keyword id="KW-0997">Cell inner membrane</keyword>
<keyword id="KW-1003">Cell membrane</keyword>
<keyword id="KW-0350">Heme biosynthesis</keyword>
<keyword id="KW-0472">Membrane</keyword>
<keyword id="KW-1185">Reference proteome</keyword>
<keyword id="KW-0808">Transferase</keyword>
<keyword id="KW-0812">Transmembrane</keyword>
<keyword id="KW-1133">Transmembrane helix</keyword>
<protein>
    <recommendedName>
        <fullName>Protoheme IX farnesyltransferase</fullName>
        <ecNumber>2.5.1.141</ecNumber>
    </recommendedName>
    <alternativeName>
        <fullName>Heme B farnesyltransferase</fullName>
    </alternativeName>
    <alternativeName>
        <fullName>Heme O synthase</fullName>
    </alternativeName>
</protein>
<name>COXX_CERS4</name>
<comment type="function">
    <text evidence="2">Converts heme B (protoheme IX) to heme O by substitution of the vinyl group on carbon 2 of heme B porphyrin ring with a hydroxyethyl farnesyl side group.</text>
</comment>
<comment type="catalytic activity">
    <reaction>
        <text>heme b + (2E,6E)-farnesyl diphosphate + H2O = Fe(II)-heme o + diphosphate</text>
        <dbReference type="Rhea" id="RHEA:28070"/>
        <dbReference type="ChEBI" id="CHEBI:15377"/>
        <dbReference type="ChEBI" id="CHEBI:33019"/>
        <dbReference type="ChEBI" id="CHEBI:60344"/>
        <dbReference type="ChEBI" id="CHEBI:60530"/>
        <dbReference type="ChEBI" id="CHEBI:175763"/>
        <dbReference type="EC" id="2.5.1.141"/>
    </reaction>
</comment>
<comment type="pathway">
    <text>Porphyrin-containing compound metabolism; heme O biosynthesis; heme O from protoheme: step 1/1.</text>
</comment>
<comment type="subunit">
    <text evidence="2">Interacts with CtaA.</text>
</comment>
<comment type="subcellular location">
    <subcellularLocation>
        <location evidence="3">Cell inner membrane</location>
        <topology evidence="3">Multi-pass membrane protein</topology>
    </subcellularLocation>
</comment>
<comment type="miscellaneous">
    <text>Carbon 2 of the heme B porphyrin ring is defined according to the Fischer nomenclature.</text>
</comment>
<comment type="similarity">
    <text evidence="3">Belongs to the UbiA prenyltransferase family. Protoheme IX farnesyltransferase subfamily.</text>
</comment>
<dbReference type="EC" id="2.5.1.141"/>
<dbReference type="EMBL" id="AY692270">
    <property type="protein sequence ID" value="AAU04882.1"/>
    <property type="molecule type" value="Genomic_DNA"/>
</dbReference>
<dbReference type="EMBL" id="CP000143">
    <property type="protein sequence ID" value="ABA77975.1"/>
    <property type="molecule type" value="Genomic_DNA"/>
</dbReference>
<dbReference type="RefSeq" id="YP_351876.1">
    <property type="nucleotide sequence ID" value="NC_007493.2"/>
</dbReference>
<dbReference type="SMR" id="Q3J5F9"/>
<dbReference type="IntAct" id="Q3J5F9">
    <property type="interactions" value="1"/>
</dbReference>
<dbReference type="STRING" id="272943.RSP_1827"/>
<dbReference type="EnsemblBacteria" id="ABA77975">
    <property type="protein sequence ID" value="ABA77975"/>
    <property type="gene ID" value="RSP_1827"/>
</dbReference>
<dbReference type="GeneID" id="3719074"/>
<dbReference type="KEGG" id="rsp:RSP_1827"/>
<dbReference type="PATRIC" id="fig|272943.9.peg.713"/>
<dbReference type="eggNOG" id="COG0109">
    <property type="taxonomic scope" value="Bacteria"/>
</dbReference>
<dbReference type="OrthoDB" id="9814417at2"/>
<dbReference type="PhylomeDB" id="Q3J5F9"/>
<dbReference type="BRENDA" id="2.5.1.141">
    <property type="organism ID" value="5383"/>
</dbReference>
<dbReference type="UniPathway" id="UPA00834">
    <property type="reaction ID" value="UER00712"/>
</dbReference>
<dbReference type="Proteomes" id="UP000002703">
    <property type="component" value="Chromosome 1"/>
</dbReference>
<dbReference type="GO" id="GO:0005886">
    <property type="term" value="C:plasma membrane"/>
    <property type="evidence" value="ECO:0007669"/>
    <property type="project" value="UniProtKB-SubCell"/>
</dbReference>
<dbReference type="GO" id="GO:0008495">
    <property type="term" value="F:protoheme IX farnesyltransferase activity"/>
    <property type="evidence" value="ECO:0007669"/>
    <property type="project" value="UniProtKB-UniRule"/>
</dbReference>
<dbReference type="GO" id="GO:0048034">
    <property type="term" value="P:heme O biosynthetic process"/>
    <property type="evidence" value="ECO:0007669"/>
    <property type="project" value="UniProtKB-UniRule"/>
</dbReference>
<dbReference type="CDD" id="cd13957">
    <property type="entry name" value="PT_UbiA_Cox10"/>
    <property type="match status" value="1"/>
</dbReference>
<dbReference type="Gene3D" id="1.10.357.140">
    <property type="entry name" value="UbiA prenyltransferase"/>
    <property type="match status" value="1"/>
</dbReference>
<dbReference type="HAMAP" id="MF_00154">
    <property type="entry name" value="CyoE_CtaB"/>
    <property type="match status" value="1"/>
</dbReference>
<dbReference type="InterPro" id="IPR006369">
    <property type="entry name" value="Protohaem_IX_farnesylTrfase"/>
</dbReference>
<dbReference type="InterPro" id="IPR000537">
    <property type="entry name" value="UbiA_prenyltransferase"/>
</dbReference>
<dbReference type="InterPro" id="IPR030470">
    <property type="entry name" value="UbiA_prenylTrfase_CS"/>
</dbReference>
<dbReference type="InterPro" id="IPR044878">
    <property type="entry name" value="UbiA_sf"/>
</dbReference>
<dbReference type="NCBIfam" id="TIGR01473">
    <property type="entry name" value="cyoE_ctaB"/>
    <property type="match status" value="1"/>
</dbReference>
<dbReference type="NCBIfam" id="NF003349">
    <property type="entry name" value="PRK04375.1-2"/>
    <property type="match status" value="1"/>
</dbReference>
<dbReference type="PANTHER" id="PTHR43448:SF7">
    <property type="entry name" value="4-HYDROXYBENZOATE SOLANESYLTRANSFERASE"/>
    <property type="match status" value="1"/>
</dbReference>
<dbReference type="PANTHER" id="PTHR43448">
    <property type="entry name" value="PROTOHEME IX FARNESYLTRANSFERASE, MITOCHONDRIAL"/>
    <property type="match status" value="1"/>
</dbReference>
<dbReference type="Pfam" id="PF01040">
    <property type="entry name" value="UbiA"/>
    <property type="match status" value="1"/>
</dbReference>
<dbReference type="PROSITE" id="PS00943">
    <property type="entry name" value="UBIA"/>
    <property type="match status" value="1"/>
</dbReference>
<accession>Q3J5F9</accession>
<accession>Q66LN7</accession>
<gene>
    <name type="primary">ctaB</name>
    <name type="synonym">cox10</name>
    <name type="ordered locus">RHOS4_04070</name>
    <name type="ORF">RSP_1827</name>
</gene>
<reference key="1">
    <citation type="journal article" date="2004" name="Biochemistry">
        <title>Heme O synthase and heme A synthase from Bacillus subtilis and Rhodobacter sphaeroides interact in Escherichia coli.</title>
        <authorList>
            <person name="Brown B.M."/>
            <person name="Wang Z."/>
            <person name="Brown K.R."/>
            <person name="Cricco J.A."/>
            <person name="Hegg E.L."/>
        </authorList>
    </citation>
    <scope>NUCLEOTIDE SEQUENCE [GENOMIC DNA]</scope>
    <scope>FUNCTION</scope>
    <scope>INTERACTION</scope>
</reference>
<reference key="2">
    <citation type="submission" date="2005-09" db="EMBL/GenBank/DDBJ databases">
        <title>Complete sequence of chromosome 1 of Rhodobacter sphaeroides 2.4.1.</title>
        <authorList>
            <person name="Copeland A."/>
            <person name="Lucas S."/>
            <person name="Lapidus A."/>
            <person name="Barry K."/>
            <person name="Detter J.C."/>
            <person name="Glavina T."/>
            <person name="Hammon N."/>
            <person name="Israni S."/>
            <person name="Pitluck S."/>
            <person name="Richardson P."/>
            <person name="Mackenzie C."/>
            <person name="Choudhary M."/>
            <person name="Larimer F."/>
            <person name="Hauser L.J."/>
            <person name="Land M."/>
            <person name="Donohue T.J."/>
            <person name="Kaplan S."/>
        </authorList>
    </citation>
    <scope>NUCLEOTIDE SEQUENCE [LARGE SCALE GENOMIC DNA]</scope>
    <source>
        <strain>ATCC 17023 / DSM 158 / JCM 6121 / CCUG 31486 / LMG 2827 / NBRC 12203 / NCIMB 8253 / ATH 2.4.1.</strain>
    </source>
</reference>
<feature type="chain" id="PRO_0000327134" description="Protoheme IX farnesyltransferase">
    <location>
        <begin position="1"/>
        <end position="310"/>
    </location>
</feature>
<feature type="transmembrane region" description="Helical" evidence="1">
    <location>
        <begin position="26"/>
        <end position="45"/>
    </location>
</feature>
<feature type="transmembrane region" description="Helical" evidence="1">
    <location>
        <begin position="49"/>
        <end position="71"/>
    </location>
</feature>
<feature type="transmembrane region" description="Helical" evidence="1">
    <location>
        <begin position="95"/>
        <end position="115"/>
    </location>
</feature>
<feature type="transmembrane region" description="Helical" evidence="1">
    <location>
        <begin position="118"/>
        <end position="138"/>
    </location>
</feature>
<feature type="transmembrane region" description="Helical" evidence="1">
    <location>
        <begin position="147"/>
        <end position="167"/>
    </location>
</feature>
<feature type="transmembrane region" description="Helical" evidence="1">
    <location>
        <begin position="174"/>
        <end position="194"/>
    </location>
</feature>
<feature type="transmembrane region" description="Helical" evidence="1">
    <location>
        <begin position="220"/>
        <end position="240"/>
    </location>
</feature>
<feature type="transmembrane region" description="Helical" evidence="1">
    <location>
        <begin position="243"/>
        <end position="263"/>
    </location>
</feature>
<feature type="transmembrane region" description="Helical" evidence="1">
    <location>
        <begin position="289"/>
        <end position="309"/>
    </location>
</feature>
<proteinExistence type="evidence at protein level"/>